<organism>
    <name type="scientific">Nostoc sp. (strain PCC 7120 / SAG 25.82 / UTEX 2576)</name>
    <dbReference type="NCBI Taxonomy" id="103690"/>
    <lineage>
        <taxon>Bacteria</taxon>
        <taxon>Bacillati</taxon>
        <taxon>Cyanobacteriota</taxon>
        <taxon>Cyanophyceae</taxon>
        <taxon>Nostocales</taxon>
        <taxon>Nostocaceae</taxon>
        <taxon>Nostoc</taxon>
    </lineage>
</organism>
<accession>Q8YVM2</accession>
<keyword id="KW-1185">Reference proteome</keyword>
<keyword id="KW-0687">Ribonucleoprotein</keyword>
<keyword id="KW-0689">Ribosomal protein</keyword>
<proteinExistence type="inferred from homology"/>
<name>RS16_NOSS1</name>
<dbReference type="EMBL" id="BA000019">
    <property type="protein sequence ID" value="BAB73652.1"/>
    <property type="molecule type" value="Genomic_DNA"/>
</dbReference>
<dbReference type="PIR" id="AC2050">
    <property type="entry name" value="AC2050"/>
</dbReference>
<dbReference type="RefSeq" id="WP_010996117.1">
    <property type="nucleotide sequence ID" value="NZ_RSCN01000031.1"/>
</dbReference>
<dbReference type="SMR" id="Q8YVM2"/>
<dbReference type="STRING" id="103690.gene:10493972"/>
<dbReference type="GeneID" id="58721922"/>
<dbReference type="KEGG" id="ana:asr1953"/>
<dbReference type="eggNOG" id="COG0228">
    <property type="taxonomic scope" value="Bacteria"/>
</dbReference>
<dbReference type="OrthoDB" id="9807878at2"/>
<dbReference type="Proteomes" id="UP000002483">
    <property type="component" value="Chromosome"/>
</dbReference>
<dbReference type="GO" id="GO:0005737">
    <property type="term" value="C:cytoplasm"/>
    <property type="evidence" value="ECO:0007669"/>
    <property type="project" value="UniProtKB-ARBA"/>
</dbReference>
<dbReference type="GO" id="GO:0015935">
    <property type="term" value="C:small ribosomal subunit"/>
    <property type="evidence" value="ECO:0007669"/>
    <property type="project" value="TreeGrafter"/>
</dbReference>
<dbReference type="GO" id="GO:0003735">
    <property type="term" value="F:structural constituent of ribosome"/>
    <property type="evidence" value="ECO:0007669"/>
    <property type="project" value="InterPro"/>
</dbReference>
<dbReference type="GO" id="GO:0006412">
    <property type="term" value="P:translation"/>
    <property type="evidence" value="ECO:0007669"/>
    <property type="project" value="UniProtKB-UniRule"/>
</dbReference>
<dbReference type="Gene3D" id="3.30.1320.10">
    <property type="match status" value="1"/>
</dbReference>
<dbReference type="HAMAP" id="MF_00385">
    <property type="entry name" value="Ribosomal_bS16"/>
    <property type="match status" value="1"/>
</dbReference>
<dbReference type="InterPro" id="IPR000307">
    <property type="entry name" value="Ribosomal_bS16"/>
</dbReference>
<dbReference type="InterPro" id="IPR020592">
    <property type="entry name" value="Ribosomal_bS16_CS"/>
</dbReference>
<dbReference type="InterPro" id="IPR023803">
    <property type="entry name" value="Ribosomal_bS16_dom_sf"/>
</dbReference>
<dbReference type="NCBIfam" id="TIGR00002">
    <property type="entry name" value="S16"/>
    <property type="match status" value="1"/>
</dbReference>
<dbReference type="PANTHER" id="PTHR12919">
    <property type="entry name" value="30S RIBOSOMAL PROTEIN S16"/>
    <property type="match status" value="1"/>
</dbReference>
<dbReference type="PANTHER" id="PTHR12919:SF20">
    <property type="entry name" value="SMALL RIBOSOMAL SUBUNIT PROTEIN BS16M"/>
    <property type="match status" value="1"/>
</dbReference>
<dbReference type="Pfam" id="PF00886">
    <property type="entry name" value="Ribosomal_S16"/>
    <property type="match status" value="1"/>
</dbReference>
<dbReference type="SUPFAM" id="SSF54565">
    <property type="entry name" value="Ribosomal protein S16"/>
    <property type="match status" value="1"/>
</dbReference>
<dbReference type="PROSITE" id="PS00732">
    <property type="entry name" value="RIBOSOMAL_S16"/>
    <property type="match status" value="1"/>
</dbReference>
<feature type="chain" id="PRO_0000167145" description="Small ribosomal subunit protein bS16">
    <location>
        <begin position="1"/>
        <end position="86"/>
    </location>
</feature>
<evidence type="ECO:0000255" key="1">
    <source>
        <dbReference type="HAMAP-Rule" id="MF_00385"/>
    </source>
</evidence>
<evidence type="ECO:0000305" key="2"/>
<comment type="similarity">
    <text evidence="1">Belongs to the bacterial ribosomal protein bS16 family.</text>
</comment>
<reference key="1">
    <citation type="journal article" date="2001" name="DNA Res.">
        <title>Complete genomic sequence of the filamentous nitrogen-fixing cyanobacterium Anabaena sp. strain PCC 7120.</title>
        <authorList>
            <person name="Kaneko T."/>
            <person name="Nakamura Y."/>
            <person name="Wolk C.P."/>
            <person name="Kuritz T."/>
            <person name="Sasamoto S."/>
            <person name="Watanabe A."/>
            <person name="Iriguchi M."/>
            <person name="Ishikawa A."/>
            <person name="Kawashima K."/>
            <person name="Kimura T."/>
            <person name="Kishida Y."/>
            <person name="Kohara M."/>
            <person name="Matsumoto M."/>
            <person name="Matsuno A."/>
            <person name="Muraki A."/>
            <person name="Nakazaki N."/>
            <person name="Shimpo S."/>
            <person name="Sugimoto M."/>
            <person name="Takazawa M."/>
            <person name="Yamada M."/>
            <person name="Yasuda M."/>
            <person name="Tabata S."/>
        </authorList>
    </citation>
    <scope>NUCLEOTIDE SEQUENCE [LARGE SCALE GENOMIC DNA]</scope>
    <source>
        <strain>PCC 7120 / SAG 25.82 / UTEX 2576</strain>
    </source>
</reference>
<gene>
    <name evidence="1" type="primary">rpsP</name>
    <name evidence="1" type="synonym">rps16</name>
    <name type="ordered locus">asr1953</name>
</gene>
<sequence length="86" mass="9997">MIKLRLKRFGKKREASYRIVAMNNLSRRDGRPLEELGYYNPRTDEVRLDVPGIVKRLQQGAQPTDTVRRILQKQNVFEQVSAKPAS</sequence>
<protein>
    <recommendedName>
        <fullName evidence="1">Small ribosomal subunit protein bS16</fullName>
    </recommendedName>
    <alternativeName>
        <fullName evidence="2">30S ribosomal protein S16</fullName>
    </alternativeName>
</protein>